<organism>
    <name type="scientific">Ovis aries</name>
    <name type="common">Sheep</name>
    <dbReference type="NCBI Taxonomy" id="9940"/>
    <lineage>
        <taxon>Eukaryota</taxon>
        <taxon>Metazoa</taxon>
        <taxon>Chordata</taxon>
        <taxon>Craniata</taxon>
        <taxon>Vertebrata</taxon>
        <taxon>Euteleostomi</taxon>
        <taxon>Mammalia</taxon>
        <taxon>Eutheria</taxon>
        <taxon>Laurasiatheria</taxon>
        <taxon>Artiodactyla</taxon>
        <taxon>Ruminantia</taxon>
        <taxon>Pecora</taxon>
        <taxon>Bovidae</taxon>
        <taxon>Caprinae</taxon>
        <taxon>Ovis</taxon>
    </lineage>
</organism>
<evidence type="ECO:0000250" key="1"/>
<evidence type="ECO:0000250" key="2">
    <source>
        <dbReference type="UniProtKB" id="P07750"/>
    </source>
</evidence>
<evidence type="ECO:0000255" key="3"/>
<evidence type="ECO:0000305" key="4"/>
<keyword id="KW-0075">B-cell activation</keyword>
<keyword id="KW-0202">Cytokine</keyword>
<keyword id="KW-1015">Disulfide bond</keyword>
<keyword id="KW-0325">Glycoprotein</keyword>
<keyword id="KW-0339">Growth factor</keyword>
<keyword id="KW-1185">Reference proteome</keyword>
<keyword id="KW-0964">Secreted</keyword>
<keyword id="KW-0732">Signal</keyword>
<name>IL4_SHEEP</name>
<feature type="signal peptide" evidence="1">
    <location>
        <begin position="1"/>
        <end position="24"/>
    </location>
</feature>
<feature type="chain" id="PRO_0000015543" description="Interleukin-4">
    <location>
        <begin position="25"/>
        <end position="135"/>
    </location>
</feature>
<feature type="glycosylation site" description="N-linked (GlcNAc...) asparagine" evidence="3">
    <location>
        <position position="62"/>
    </location>
</feature>
<feature type="glycosylation site" description="N-linked (GlcNAc...) asparagine" evidence="3">
    <location>
        <position position="96"/>
    </location>
</feature>
<feature type="disulfide bond" evidence="1">
    <location>
        <begin position="48"/>
        <end position="85"/>
    </location>
</feature>
<feature type="disulfide bond" evidence="1">
    <location>
        <begin position="70"/>
        <end position="105"/>
    </location>
</feature>
<feature type="sequence conflict" description="In Ref. 1; AAA31552." evidence="4" ref="1">
    <original>L</original>
    <variation>P</variation>
    <location>
        <position position="38"/>
    </location>
</feature>
<feature type="sequence conflict" description="In Ref. 1; AAA31552." evidence="4" ref="1">
    <original>R</original>
    <variation>Q</variation>
    <location>
        <position position="44"/>
    </location>
</feature>
<feature type="sequence conflict" description="In Ref. 1; AAA31552." evidence="4" ref="1">
    <original>V</original>
    <variation>A</variation>
    <location>
        <position position="53"/>
    </location>
</feature>
<feature type="sequence conflict" description="In Ref. 1; AAA31552." evidence="4" ref="1">
    <original>A</original>
    <variation>T</variation>
    <location>
        <position position="72"/>
    </location>
</feature>
<sequence length="135" mass="15136">MGLTSQLIPALVCLLVCTSHFVHGHKCDITLEEIIKTLNILTSRKNSCMELPVADVFAAPKNATEKETFCRAGIELRRIYRSHMCLNKFLGGLDRNLSSLASKTCSVNEAKTSTSTLRDLLERLKTIMREKYSKC</sequence>
<accession>P30368</accession>
<accession>Q95MZ6</accession>
<reference key="1">
    <citation type="journal article" date="1993" name="Gene">
        <title>Cloning and sequencing an ovine interleukin-4-encoding cDNA.</title>
        <authorList>
            <person name="Seow H.F."/>
            <person name="Rothel J.S."/>
            <person name="Wood P.R."/>
        </authorList>
    </citation>
    <scope>NUCLEOTIDE SEQUENCE [MRNA]</scope>
</reference>
<reference key="2">
    <citation type="journal article" date="2000" name="J. Interferon Cytokine Res.">
        <title>The expression and biologic effects of ovine interleukin-4 on T and B cell proliferation.</title>
        <authorList>
            <person name="Chaplin P.J."/>
            <person name="Casey G."/>
            <person name="De Rose R."/>
            <person name="Buchan G."/>
            <person name="Wood P.R."/>
            <person name="Scheerlinck J.P."/>
        </authorList>
    </citation>
    <scope>NUCLEOTIDE SEQUENCE [MRNA]</scope>
</reference>
<reference key="3">
    <citation type="journal article" date="1992" name="DNA Seq.">
        <title>The isolation and sequence of sheep interleukin 4.</title>
        <authorList>
            <person name="Engwerda C.R."/>
            <person name="Sandeman M."/>
        </authorList>
    </citation>
    <scope>NUCLEOTIDE SEQUENCE [MRNA] OF 8-119</scope>
</reference>
<gene>
    <name type="primary">IL4</name>
    <name type="synonym">IL-4</name>
</gene>
<protein>
    <recommendedName>
        <fullName>Interleukin-4</fullName>
        <shortName>IL-4</shortName>
    </recommendedName>
    <alternativeName>
        <fullName>B-cell stimulatory factor 1</fullName>
        <shortName>BSF-1</shortName>
    </alternativeName>
    <alternativeName>
        <fullName>Lymphocyte stimulatory factor 1</fullName>
    </alternativeName>
</protein>
<dbReference type="EMBL" id="M96845">
    <property type="protein sequence ID" value="AAA31552.1"/>
    <property type="molecule type" value="mRNA"/>
</dbReference>
<dbReference type="EMBL" id="AF172168">
    <property type="protein sequence ID" value="AAD49370.1"/>
    <property type="molecule type" value="mRNA"/>
</dbReference>
<dbReference type="EMBL" id="Z11897">
    <property type="protein sequence ID" value="CAA77950.1"/>
    <property type="molecule type" value="mRNA"/>
</dbReference>
<dbReference type="PIR" id="JU0139">
    <property type="entry name" value="JU0139"/>
</dbReference>
<dbReference type="RefSeq" id="NP_001009313.2">
    <property type="nucleotide sequence ID" value="NM_001009313.2"/>
</dbReference>
<dbReference type="SMR" id="P30368"/>
<dbReference type="STRING" id="9940.ENSOARP00000015980"/>
<dbReference type="GlyCosmos" id="P30368">
    <property type="glycosylation" value="2 sites, No reported glycans"/>
</dbReference>
<dbReference type="PaxDb" id="9940-ENSOARP00000015980"/>
<dbReference type="GeneID" id="101122781"/>
<dbReference type="KEGG" id="oas:101122781"/>
<dbReference type="CTD" id="3565"/>
<dbReference type="eggNOG" id="KOG3886">
    <property type="taxonomic scope" value="Eukaryota"/>
</dbReference>
<dbReference type="OrthoDB" id="9528087at2759"/>
<dbReference type="Proteomes" id="UP000002356">
    <property type="component" value="Unplaced"/>
</dbReference>
<dbReference type="GO" id="GO:0005615">
    <property type="term" value="C:extracellular space"/>
    <property type="evidence" value="ECO:0007669"/>
    <property type="project" value="UniProtKB-KW"/>
</dbReference>
<dbReference type="GO" id="GO:0005125">
    <property type="term" value="F:cytokine activity"/>
    <property type="evidence" value="ECO:0007669"/>
    <property type="project" value="UniProtKB-KW"/>
</dbReference>
<dbReference type="GO" id="GO:0008083">
    <property type="term" value="F:growth factor activity"/>
    <property type="evidence" value="ECO:0007669"/>
    <property type="project" value="UniProtKB-KW"/>
</dbReference>
<dbReference type="GO" id="GO:0005136">
    <property type="term" value="F:interleukin-4 receptor binding"/>
    <property type="evidence" value="ECO:0007669"/>
    <property type="project" value="InterPro"/>
</dbReference>
<dbReference type="GO" id="GO:0042113">
    <property type="term" value="P:B cell activation"/>
    <property type="evidence" value="ECO:0007669"/>
    <property type="project" value="UniProtKB-KW"/>
</dbReference>
<dbReference type="GO" id="GO:0006955">
    <property type="term" value="P:immune response"/>
    <property type="evidence" value="ECO:0007669"/>
    <property type="project" value="InterPro"/>
</dbReference>
<dbReference type="GO" id="GO:0035771">
    <property type="term" value="P:interleukin-4-mediated signaling pathway"/>
    <property type="evidence" value="ECO:0007669"/>
    <property type="project" value="TreeGrafter"/>
</dbReference>
<dbReference type="GO" id="GO:0050728">
    <property type="term" value="P:negative regulation of inflammatory response"/>
    <property type="evidence" value="ECO:0007669"/>
    <property type="project" value="TreeGrafter"/>
</dbReference>
<dbReference type="GO" id="GO:0045893">
    <property type="term" value="P:positive regulation of DNA-templated transcription"/>
    <property type="evidence" value="ECO:0007669"/>
    <property type="project" value="TreeGrafter"/>
</dbReference>
<dbReference type="GO" id="GO:0016239">
    <property type="term" value="P:positive regulation of macroautophagy"/>
    <property type="evidence" value="ECO:0000250"/>
    <property type="project" value="UniProtKB"/>
</dbReference>
<dbReference type="GO" id="GO:0050776">
    <property type="term" value="P:regulation of immune response"/>
    <property type="evidence" value="ECO:0007669"/>
    <property type="project" value="TreeGrafter"/>
</dbReference>
<dbReference type="FunFam" id="1.20.1250.10:FF:000014">
    <property type="entry name" value="Interleukin-4"/>
    <property type="match status" value="1"/>
</dbReference>
<dbReference type="Gene3D" id="1.20.1250.10">
    <property type="match status" value="1"/>
</dbReference>
<dbReference type="InterPro" id="IPR009079">
    <property type="entry name" value="4_helix_cytokine-like_core"/>
</dbReference>
<dbReference type="InterPro" id="IPR002354">
    <property type="entry name" value="IL-4"/>
</dbReference>
<dbReference type="InterPro" id="IPR001325">
    <property type="entry name" value="IL-4/IL-13"/>
</dbReference>
<dbReference type="InterPro" id="IPR018096">
    <property type="entry name" value="IL-4/IL-13_CS"/>
</dbReference>
<dbReference type="PANTHER" id="PTHR47401">
    <property type="entry name" value="INTERLEUKIN-4"/>
    <property type="match status" value="1"/>
</dbReference>
<dbReference type="PANTHER" id="PTHR47401:SF1">
    <property type="entry name" value="INTERLEUKIN-4"/>
    <property type="match status" value="1"/>
</dbReference>
<dbReference type="Pfam" id="PF00727">
    <property type="entry name" value="IL4"/>
    <property type="match status" value="1"/>
</dbReference>
<dbReference type="PIRSF" id="PIRSF001941">
    <property type="entry name" value="Interleukin_4"/>
    <property type="match status" value="1"/>
</dbReference>
<dbReference type="PRINTS" id="PR00431">
    <property type="entry name" value="INTERLEUKIN4"/>
</dbReference>
<dbReference type="SMART" id="SM00190">
    <property type="entry name" value="IL4_13"/>
    <property type="match status" value="1"/>
</dbReference>
<dbReference type="SUPFAM" id="SSF47266">
    <property type="entry name" value="4-helical cytokines"/>
    <property type="match status" value="1"/>
</dbReference>
<dbReference type="PROSITE" id="PS00838">
    <property type="entry name" value="INTERLEUKIN_4_13"/>
    <property type="match status" value="1"/>
</dbReference>
<proteinExistence type="evidence at transcript level"/>
<comment type="function">
    <text evidence="2">Participates in at least several B-cell activation processes as well as of other cell types. It is a costimulator of DNA-synthesis. It induces the expression of class II MHC molecules on resting B-cells. It enhances both secretion and cell surface expression of IgE and IgG1. It also regulates the expression of the low affinity Fc receptor for IgE (CD23) on both lymphocytes and monocytes. Positively regulates IL31RA expression in macrophages. Stimulates autophagy in dendritic cells by interfering with mTORC1 signaling and through the induction of RUFY4.</text>
</comment>
<comment type="subcellular location">
    <subcellularLocation>
        <location>Secreted</location>
    </subcellularLocation>
</comment>
<comment type="similarity">
    <text evidence="4">Belongs to the IL-4/IL-13 family.</text>
</comment>